<keyword id="KW-1185">Reference proteome</keyword>
<keyword id="KW-0687">Ribonucleoprotein</keyword>
<keyword id="KW-0689">Ribosomal protein</keyword>
<dbReference type="EMBL" id="CP001154">
    <property type="protein sequence ID" value="ACO73256.1"/>
    <property type="molecule type" value="Genomic_DNA"/>
</dbReference>
<dbReference type="RefSeq" id="WP_012695750.1">
    <property type="nucleotide sequence ID" value="NC_012559.1"/>
</dbReference>
<dbReference type="SMR" id="C1DAS5"/>
<dbReference type="STRING" id="557598.LHK_00261"/>
<dbReference type="GeneID" id="75109499"/>
<dbReference type="KEGG" id="lhk:LHK_00261"/>
<dbReference type="eggNOG" id="COG0255">
    <property type="taxonomic scope" value="Bacteria"/>
</dbReference>
<dbReference type="HOGENOM" id="CLU_158491_1_1_4"/>
<dbReference type="Proteomes" id="UP000002010">
    <property type="component" value="Chromosome"/>
</dbReference>
<dbReference type="GO" id="GO:0022625">
    <property type="term" value="C:cytosolic large ribosomal subunit"/>
    <property type="evidence" value="ECO:0007669"/>
    <property type="project" value="TreeGrafter"/>
</dbReference>
<dbReference type="GO" id="GO:0003735">
    <property type="term" value="F:structural constituent of ribosome"/>
    <property type="evidence" value="ECO:0007669"/>
    <property type="project" value="InterPro"/>
</dbReference>
<dbReference type="GO" id="GO:0006412">
    <property type="term" value="P:translation"/>
    <property type="evidence" value="ECO:0007669"/>
    <property type="project" value="UniProtKB-UniRule"/>
</dbReference>
<dbReference type="CDD" id="cd00427">
    <property type="entry name" value="Ribosomal_L29_HIP"/>
    <property type="match status" value="1"/>
</dbReference>
<dbReference type="FunFam" id="1.10.287.310:FF:000001">
    <property type="entry name" value="50S ribosomal protein L29"/>
    <property type="match status" value="1"/>
</dbReference>
<dbReference type="Gene3D" id="1.10.287.310">
    <property type="match status" value="1"/>
</dbReference>
<dbReference type="HAMAP" id="MF_00374">
    <property type="entry name" value="Ribosomal_uL29"/>
    <property type="match status" value="1"/>
</dbReference>
<dbReference type="InterPro" id="IPR050063">
    <property type="entry name" value="Ribosomal_protein_uL29"/>
</dbReference>
<dbReference type="InterPro" id="IPR001854">
    <property type="entry name" value="Ribosomal_uL29"/>
</dbReference>
<dbReference type="InterPro" id="IPR018254">
    <property type="entry name" value="Ribosomal_uL29_CS"/>
</dbReference>
<dbReference type="InterPro" id="IPR036049">
    <property type="entry name" value="Ribosomal_uL29_sf"/>
</dbReference>
<dbReference type="NCBIfam" id="TIGR00012">
    <property type="entry name" value="L29"/>
    <property type="match status" value="1"/>
</dbReference>
<dbReference type="PANTHER" id="PTHR10916">
    <property type="entry name" value="60S RIBOSOMAL PROTEIN L35/50S RIBOSOMAL PROTEIN L29"/>
    <property type="match status" value="1"/>
</dbReference>
<dbReference type="PANTHER" id="PTHR10916:SF0">
    <property type="entry name" value="LARGE RIBOSOMAL SUBUNIT PROTEIN UL29C"/>
    <property type="match status" value="1"/>
</dbReference>
<dbReference type="Pfam" id="PF00831">
    <property type="entry name" value="Ribosomal_L29"/>
    <property type="match status" value="1"/>
</dbReference>
<dbReference type="SUPFAM" id="SSF46561">
    <property type="entry name" value="Ribosomal protein L29 (L29p)"/>
    <property type="match status" value="1"/>
</dbReference>
<dbReference type="PROSITE" id="PS00579">
    <property type="entry name" value="RIBOSOMAL_L29"/>
    <property type="match status" value="1"/>
</dbReference>
<accession>C1DAS5</accession>
<evidence type="ECO:0000255" key="1">
    <source>
        <dbReference type="HAMAP-Rule" id="MF_00374"/>
    </source>
</evidence>
<evidence type="ECO:0000305" key="2"/>
<feature type="chain" id="PRO_1000194022" description="Large ribosomal subunit protein uL29">
    <location>
        <begin position="1"/>
        <end position="62"/>
    </location>
</feature>
<name>RL29_LARHH</name>
<gene>
    <name evidence="1" type="primary">rpmC</name>
    <name type="ordered locus">LHK_00261</name>
</gene>
<protein>
    <recommendedName>
        <fullName evidence="1">Large ribosomal subunit protein uL29</fullName>
    </recommendedName>
    <alternativeName>
        <fullName evidence="2">50S ribosomal protein L29</fullName>
    </alternativeName>
</protein>
<organism>
    <name type="scientific">Laribacter hongkongensis (strain HLHK9)</name>
    <dbReference type="NCBI Taxonomy" id="557598"/>
    <lineage>
        <taxon>Bacteria</taxon>
        <taxon>Pseudomonadati</taxon>
        <taxon>Pseudomonadota</taxon>
        <taxon>Betaproteobacteria</taxon>
        <taxon>Neisseriales</taxon>
        <taxon>Aquaspirillaceae</taxon>
        <taxon>Laribacter</taxon>
    </lineage>
</organism>
<comment type="similarity">
    <text evidence="1">Belongs to the universal ribosomal protein uL29 family.</text>
</comment>
<reference key="1">
    <citation type="journal article" date="2009" name="PLoS Genet.">
        <title>The complete genome and proteome of Laribacter hongkongensis reveal potential mechanisms for adaptations to different temperatures and habitats.</title>
        <authorList>
            <person name="Woo P.C.Y."/>
            <person name="Lau S.K.P."/>
            <person name="Tse H."/>
            <person name="Teng J.L.L."/>
            <person name="Curreem S.O."/>
            <person name="Tsang A.K.L."/>
            <person name="Fan R.Y.Y."/>
            <person name="Wong G.K.M."/>
            <person name="Huang Y."/>
            <person name="Loman N.J."/>
            <person name="Snyder L.A.S."/>
            <person name="Cai J.J."/>
            <person name="Huang J.-D."/>
            <person name="Mak W."/>
            <person name="Pallen M.J."/>
            <person name="Lok S."/>
            <person name="Yuen K.-Y."/>
        </authorList>
    </citation>
    <scope>NUCLEOTIDE SEQUENCE [LARGE SCALE GENOMIC DNA]</scope>
    <source>
        <strain>HLHK9</strain>
    </source>
</reference>
<sequence>MKASELRAKSVDELKTELLSLLKAQFGLRMQLATQQLAKTSELKKVRRDIARVRTILSEKAA</sequence>
<proteinExistence type="inferred from homology"/>